<protein>
    <recommendedName>
        <fullName evidence="1">Hydroxyacylglutathione hydrolase</fullName>
        <ecNumber evidence="1">3.1.2.6</ecNumber>
    </recommendedName>
    <alternativeName>
        <fullName evidence="1">Glyoxalase II</fullName>
        <shortName evidence="1">Glx II</shortName>
    </alternativeName>
</protein>
<proteinExistence type="inferred from homology"/>
<sequence length="252" mass="27825">MRILQLPALRDNYIYLLHDPETATAAVVDPTVAEPVLDKLAELGAELVAIFNTHHHHDHVGGNLQLLARYPRAVVYGSQADRGRIPGQTVELQAGETVAFAGRQAKVLFVPGHTRGHVAYYFPESGDLFCGDTLFAGGCGRLFEGTPEQMLGSLDQLRQLPEATRVWCAHEYTLNNLKFALTVDGDNPDLQARYQQVVALRQAGSPTVPSTIGEERRTNPFLRWDQPALRAATGAQDPVRVFARLRGMKDQF</sequence>
<evidence type="ECO:0000255" key="1">
    <source>
        <dbReference type="HAMAP-Rule" id="MF_01374"/>
    </source>
</evidence>
<keyword id="KW-0378">Hydrolase</keyword>
<keyword id="KW-0479">Metal-binding</keyword>
<keyword id="KW-0862">Zinc</keyword>
<gene>
    <name evidence="1" type="primary">gloB</name>
    <name type="ordered locus">CYA_1132</name>
</gene>
<dbReference type="EC" id="3.1.2.6" evidence="1"/>
<dbReference type="EMBL" id="CP000239">
    <property type="protein sequence ID" value="ABC99320.1"/>
    <property type="molecule type" value="Genomic_DNA"/>
</dbReference>
<dbReference type="RefSeq" id="WP_011430001.1">
    <property type="nucleotide sequence ID" value="NC_007775.1"/>
</dbReference>
<dbReference type="SMR" id="Q2JVC3"/>
<dbReference type="STRING" id="321327.CYA_1132"/>
<dbReference type="KEGG" id="cya:CYA_1132"/>
<dbReference type="eggNOG" id="COG0491">
    <property type="taxonomic scope" value="Bacteria"/>
</dbReference>
<dbReference type="HOGENOM" id="CLU_030571_4_1_3"/>
<dbReference type="OrthoDB" id="9802897at2"/>
<dbReference type="UniPathway" id="UPA00619">
    <property type="reaction ID" value="UER00676"/>
</dbReference>
<dbReference type="Proteomes" id="UP000008818">
    <property type="component" value="Chromosome"/>
</dbReference>
<dbReference type="GO" id="GO:0004416">
    <property type="term" value="F:hydroxyacylglutathione hydrolase activity"/>
    <property type="evidence" value="ECO:0007669"/>
    <property type="project" value="UniProtKB-UniRule"/>
</dbReference>
<dbReference type="GO" id="GO:0046872">
    <property type="term" value="F:metal ion binding"/>
    <property type="evidence" value="ECO:0007669"/>
    <property type="project" value="UniProtKB-KW"/>
</dbReference>
<dbReference type="GO" id="GO:0019243">
    <property type="term" value="P:methylglyoxal catabolic process to D-lactate via S-lactoyl-glutathione"/>
    <property type="evidence" value="ECO:0007669"/>
    <property type="project" value="InterPro"/>
</dbReference>
<dbReference type="CDD" id="cd07723">
    <property type="entry name" value="hydroxyacylglutathione_hydrolase_MBL-fold"/>
    <property type="match status" value="1"/>
</dbReference>
<dbReference type="Gene3D" id="3.60.15.10">
    <property type="entry name" value="Ribonuclease Z/Hydroxyacylglutathione hydrolase-like"/>
    <property type="match status" value="1"/>
</dbReference>
<dbReference type="HAMAP" id="MF_01374">
    <property type="entry name" value="Glyoxalase_2"/>
    <property type="match status" value="1"/>
</dbReference>
<dbReference type="InterPro" id="IPR035680">
    <property type="entry name" value="Clx_II_MBL"/>
</dbReference>
<dbReference type="InterPro" id="IPR050110">
    <property type="entry name" value="Glyoxalase_II_hydrolase"/>
</dbReference>
<dbReference type="InterPro" id="IPR032282">
    <property type="entry name" value="HAGH_C"/>
</dbReference>
<dbReference type="InterPro" id="IPR017782">
    <property type="entry name" value="Hydroxyacylglutathione_Hdrlase"/>
</dbReference>
<dbReference type="InterPro" id="IPR001279">
    <property type="entry name" value="Metallo-B-lactamas"/>
</dbReference>
<dbReference type="InterPro" id="IPR036866">
    <property type="entry name" value="RibonucZ/Hydroxyglut_hydro"/>
</dbReference>
<dbReference type="NCBIfam" id="TIGR03413">
    <property type="entry name" value="GSH_gloB"/>
    <property type="match status" value="1"/>
</dbReference>
<dbReference type="PANTHER" id="PTHR43705">
    <property type="entry name" value="HYDROXYACYLGLUTATHIONE HYDROLASE"/>
    <property type="match status" value="1"/>
</dbReference>
<dbReference type="PANTHER" id="PTHR43705:SF1">
    <property type="entry name" value="HYDROXYACYLGLUTATHIONE HYDROLASE GLOB"/>
    <property type="match status" value="1"/>
</dbReference>
<dbReference type="Pfam" id="PF16123">
    <property type="entry name" value="HAGH_C"/>
    <property type="match status" value="1"/>
</dbReference>
<dbReference type="Pfam" id="PF00753">
    <property type="entry name" value="Lactamase_B"/>
    <property type="match status" value="1"/>
</dbReference>
<dbReference type="PIRSF" id="PIRSF005457">
    <property type="entry name" value="Glx"/>
    <property type="match status" value="1"/>
</dbReference>
<dbReference type="SMART" id="SM00849">
    <property type="entry name" value="Lactamase_B"/>
    <property type="match status" value="1"/>
</dbReference>
<dbReference type="SUPFAM" id="SSF56281">
    <property type="entry name" value="Metallo-hydrolase/oxidoreductase"/>
    <property type="match status" value="1"/>
</dbReference>
<organism>
    <name type="scientific">Synechococcus sp. (strain JA-3-3Ab)</name>
    <name type="common">Cyanobacteria bacterium Yellowstone A-Prime</name>
    <dbReference type="NCBI Taxonomy" id="321327"/>
    <lineage>
        <taxon>Bacteria</taxon>
        <taxon>Bacillati</taxon>
        <taxon>Cyanobacteriota</taxon>
        <taxon>Cyanophyceae</taxon>
        <taxon>Synechococcales</taxon>
        <taxon>Synechococcaceae</taxon>
        <taxon>Synechococcus</taxon>
    </lineage>
</organism>
<name>GLO2_SYNJA</name>
<accession>Q2JVC3</accession>
<reference key="1">
    <citation type="journal article" date="2007" name="ISME J.">
        <title>Population level functional diversity in a microbial community revealed by comparative genomic and metagenomic analyses.</title>
        <authorList>
            <person name="Bhaya D."/>
            <person name="Grossman A.R."/>
            <person name="Steunou A.-S."/>
            <person name="Khuri N."/>
            <person name="Cohan F.M."/>
            <person name="Hamamura N."/>
            <person name="Melendrez M.C."/>
            <person name="Bateson M.M."/>
            <person name="Ward D.M."/>
            <person name="Heidelberg J.F."/>
        </authorList>
    </citation>
    <scope>NUCLEOTIDE SEQUENCE [LARGE SCALE GENOMIC DNA]</scope>
    <source>
        <strain>JA-3-3Ab</strain>
    </source>
</reference>
<comment type="function">
    <text evidence="1">Thiolesterase that catalyzes the hydrolysis of S-D-lactoyl-glutathione to form glutathione and D-lactic acid.</text>
</comment>
<comment type="catalytic activity">
    <reaction evidence="1">
        <text>an S-(2-hydroxyacyl)glutathione + H2O = a 2-hydroxy carboxylate + glutathione + H(+)</text>
        <dbReference type="Rhea" id="RHEA:21864"/>
        <dbReference type="ChEBI" id="CHEBI:15377"/>
        <dbReference type="ChEBI" id="CHEBI:15378"/>
        <dbReference type="ChEBI" id="CHEBI:57925"/>
        <dbReference type="ChEBI" id="CHEBI:58896"/>
        <dbReference type="ChEBI" id="CHEBI:71261"/>
        <dbReference type="EC" id="3.1.2.6"/>
    </reaction>
</comment>
<comment type="cofactor">
    <cofactor evidence="1">
        <name>Zn(2+)</name>
        <dbReference type="ChEBI" id="CHEBI:29105"/>
    </cofactor>
    <text evidence="1">Binds 2 Zn(2+) ions per subunit.</text>
</comment>
<comment type="pathway">
    <text evidence="1">Secondary metabolite metabolism; methylglyoxal degradation; (R)-lactate from methylglyoxal: step 2/2.</text>
</comment>
<comment type="subunit">
    <text evidence="1">Monomer.</text>
</comment>
<comment type="similarity">
    <text evidence="1">Belongs to the metallo-beta-lactamase superfamily. Glyoxalase II family.</text>
</comment>
<feature type="chain" id="PRO_1000068225" description="Hydroxyacylglutathione hydrolase">
    <location>
        <begin position="1"/>
        <end position="252"/>
    </location>
</feature>
<feature type="binding site" evidence="1">
    <location>
        <position position="54"/>
    </location>
    <ligand>
        <name>Zn(2+)</name>
        <dbReference type="ChEBI" id="CHEBI:29105"/>
        <label>1</label>
    </ligand>
</feature>
<feature type="binding site" evidence="1">
    <location>
        <position position="56"/>
    </location>
    <ligand>
        <name>Zn(2+)</name>
        <dbReference type="ChEBI" id="CHEBI:29105"/>
        <label>1</label>
    </ligand>
</feature>
<feature type="binding site" evidence="1">
    <location>
        <position position="58"/>
    </location>
    <ligand>
        <name>Zn(2+)</name>
        <dbReference type="ChEBI" id="CHEBI:29105"/>
        <label>2</label>
    </ligand>
</feature>
<feature type="binding site" evidence="1">
    <location>
        <position position="59"/>
    </location>
    <ligand>
        <name>Zn(2+)</name>
        <dbReference type="ChEBI" id="CHEBI:29105"/>
        <label>2</label>
    </ligand>
</feature>
<feature type="binding site" evidence="1">
    <location>
        <position position="113"/>
    </location>
    <ligand>
        <name>Zn(2+)</name>
        <dbReference type="ChEBI" id="CHEBI:29105"/>
        <label>1</label>
    </ligand>
</feature>
<feature type="binding site" evidence="1">
    <location>
        <position position="132"/>
    </location>
    <ligand>
        <name>Zn(2+)</name>
        <dbReference type="ChEBI" id="CHEBI:29105"/>
        <label>1</label>
    </ligand>
</feature>
<feature type="binding site" evidence="1">
    <location>
        <position position="132"/>
    </location>
    <ligand>
        <name>Zn(2+)</name>
        <dbReference type="ChEBI" id="CHEBI:29105"/>
        <label>2</label>
    </ligand>
</feature>
<feature type="binding site" evidence="1">
    <location>
        <position position="170"/>
    </location>
    <ligand>
        <name>Zn(2+)</name>
        <dbReference type="ChEBI" id="CHEBI:29105"/>
        <label>2</label>
    </ligand>
</feature>